<comment type="function">
    <text evidence="1">Catalyzes the ATP-dependent phosphorylation of L-homoserine to L-homoserine phosphate.</text>
</comment>
<comment type="catalytic activity">
    <reaction evidence="1">
        <text>L-homoserine + ATP = O-phospho-L-homoserine + ADP + H(+)</text>
        <dbReference type="Rhea" id="RHEA:13985"/>
        <dbReference type="ChEBI" id="CHEBI:15378"/>
        <dbReference type="ChEBI" id="CHEBI:30616"/>
        <dbReference type="ChEBI" id="CHEBI:57476"/>
        <dbReference type="ChEBI" id="CHEBI:57590"/>
        <dbReference type="ChEBI" id="CHEBI:456216"/>
        <dbReference type="EC" id="2.7.1.39"/>
    </reaction>
</comment>
<comment type="pathway">
    <text evidence="1">Amino-acid biosynthesis; L-threonine biosynthesis; L-threonine from L-aspartate: step 4/5.</text>
</comment>
<comment type="subcellular location">
    <subcellularLocation>
        <location evidence="1">Cytoplasm</location>
    </subcellularLocation>
</comment>
<comment type="similarity">
    <text evidence="1">Belongs to the GHMP kinase family. Homoserine kinase subfamily.</text>
</comment>
<evidence type="ECO:0000255" key="1">
    <source>
        <dbReference type="HAMAP-Rule" id="MF_00384"/>
    </source>
</evidence>
<dbReference type="EC" id="2.7.1.39" evidence="1"/>
<dbReference type="EMBL" id="FM180568">
    <property type="protein sequence ID" value="CAS07551.1"/>
    <property type="molecule type" value="Genomic_DNA"/>
</dbReference>
<dbReference type="RefSeq" id="WP_000241660.1">
    <property type="nucleotide sequence ID" value="NC_011601.1"/>
</dbReference>
<dbReference type="SMR" id="B7UI48"/>
<dbReference type="GeneID" id="75202912"/>
<dbReference type="KEGG" id="ecg:E2348C_0003"/>
<dbReference type="HOGENOM" id="CLU_041243_1_1_6"/>
<dbReference type="UniPathway" id="UPA00050">
    <property type="reaction ID" value="UER00064"/>
</dbReference>
<dbReference type="Proteomes" id="UP000008205">
    <property type="component" value="Chromosome"/>
</dbReference>
<dbReference type="GO" id="GO:0005737">
    <property type="term" value="C:cytoplasm"/>
    <property type="evidence" value="ECO:0007669"/>
    <property type="project" value="UniProtKB-SubCell"/>
</dbReference>
<dbReference type="GO" id="GO:0005524">
    <property type="term" value="F:ATP binding"/>
    <property type="evidence" value="ECO:0007669"/>
    <property type="project" value="UniProtKB-UniRule"/>
</dbReference>
<dbReference type="GO" id="GO:0004413">
    <property type="term" value="F:homoserine kinase activity"/>
    <property type="evidence" value="ECO:0007669"/>
    <property type="project" value="UniProtKB-UniRule"/>
</dbReference>
<dbReference type="GO" id="GO:0009088">
    <property type="term" value="P:threonine biosynthetic process"/>
    <property type="evidence" value="ECO:0007669"/>
    <property type="project" value="UniProtKB-UniRule"/>
</dbReference>
<dbReference type="FunFam" id="3.30.230.10:FF:000020">
    <property type="entry name" value="Homoserine kinase"/>
    <property type="match status" value="1"/>
</dbReference>
<dbReference type="FunFam" id="3.30.70.890:FF:000002">
    <property type="entry name" value="Homoserine kinase"/>
    <property type="match status" value="1"/>
</dbReference>
<dbReference type="Gene3D" id="3.30.230.10">
    <property type="match status" value="1"/>
</dbReference>
<dbReference type="Gene3D" id="3.30.70.890">
    <property type="entry name" value="GHMP kinase, C-terminal domain"/>
    <property type="match status" value="1"/>
</dbReference>
<dbReference type="HAMAP" id="MF_00384">
    <property type="entry name" value="Homoser_kinase"/>
    <property type="match status" value="1"/>
</dbReference>
<dbReference type="InterPro" id="IPR013750">
    <property type="entry name" value="GHMP_kinase_C_dom"/>
</dbReference>
<dbReference type="InterPro" id="IPR036554">
    <property type="entry name" value="GHMP_kinase_C_sf"/>
</dbReference>
<dbReference type="InterPro" id="IPR006204">
    <property type="entry name" value="GHMP_kinase_N_dom"/>
</dbReference>
<dbReference type="InterPro" id="IPR006203">
    <property type="entry name" value="GHMP_knse_ATP-bd_CS"/>
</dbReference>
<dbReference type="InterPro" id="IPR000870">
    <property type="entry name" value="Homoserine_kinase"/>
</dbReference>
<dbReference type="InterPro" id="IPR020568">
    <property type="entry name" value="Ribosomal_Su5_D2-typ_SF"/>
</dbReference>
<dbReference type="InterPro" id="IPR014721">
    <property type="entry name" value="Ribsml_uS5_D2-typ_fold_subgr"/>
</dbReference>
<dbReference type="NCBIfam" id="NF002288">
    <property type="entry name" value="PRK01212.1-4"/>
    <property type="match status" value="1"/>
</dbReference>
<dbReference type="NCBIfam" id="TIGR00191">
    <property type="entry name" value="thrB"/>
    <property type="match status" value="1"/>
</dbReference>
<dbReference type="PANTHER" id="PTHR20861:SF1">
    <property type="entry name" value="HOMOSERINE KINASE"/>
    <property type="match status" value="1"/>
</dbReference>
<dbReference type="PANTHER" id="PTHR20861">
    <property type="entry name" value="HOMOSERINE/4-DIPHOSPHOCYTIDYL-2-C-METHYL-D-ERYTHRITOL KINASE"/>
    <property type="match status" value="1"/>
</dbReference>
<dbReference type="Pfam" id="PF08544">
    <property type="entry name" value="GHMP_kinases_C"/>
    <property type="match status" value="1"/>
</dbReference>
<dbReference type="Pfam" id="PF00288">
    <property type="entry name" value="GHMP_kinases_N"/>
    <property type="match status" value="1"/>
</dbReference>
<dbReference type="PIRSF" id="PIRSF000676">
    <property type="entry name" value="Homoser_kin"/>
    <property type="match status" value="1"/>
</dbReference>
<dbReference type="PRINTS" id="PR00958">
    <property type="entry name" value="HOMSERKINASE"/>
</dbReference>
<dbReference type="SUPFAM" id="SSF55060">
    <property type="entry name" value="GHMP Kinase, C-terminal domain"/>
    <property type="match status" value="1"/>
</dbReference>
<dbReference type="SUPFAM" id="SSF54211">
    <property type="entry name" value="Ribosomal protein S5 domain 2-like"/>
    <property type="match status" value="1"/>
</dbReference>
<dbReference type="PROSITE" id="PS00627">
    <property type="entry name" value="GHMP_KINASES_ATP"/>
    <property type="match status" value="1"/>
</dbReference>
<proteinExistence type="inferred from homology"/>
<keyword id="KW-0028">Amino-acid biosynthesis</keyword>
<keyword id="KW-0067">ATP-binding</keyword>
<keyword id="KW-0963">Cytoplasm</keyword>
<keyword id="KW-0418">Kinase</keyword>
<keyword id="KW-0547">Nucleotide-binding</keyword>
<keyword id="KW-1185">Reference proteome</keyword>
<keyword id="KW-0791">Threonine biosynthesis</keyword>
<keyword id="KW-0808">Transferase</keyword>
<feature type="chain" id="PRO_1000134249" description="Homoserine kinase">
    <location>
        <begin position="1"/>
        <end position="310"/>
    </location>
</feature>
<feature type="binding site" evidence="1">
    <location>
        <begin position="91"/>
        <end position="101"/>
    </location>
    <ligand>
        <name>ATP</name>
        <dbReference type="ChEBI" id="CHEBI:30616"/>
    </ligand>
</feature>
<organism>
    <name type="scientific">Escherichia coli O127:H6 (strain E2348/69 / EPEC)</name>
    <dbReference type="NCBI Taxonomy" id="574521"/>
    <lineage>
        <taxon>Bacteria</taxon>
        <taxon>Pseudomonadati</taxon>
        <taxon>Pseudomonadota</taxon>
        <taxon>Gammaproteobacteria</taxon>
        <taxon>Enterobacterales</taxon>
        <taxon>Enterobacteriaceae</taxon>
        <taxon>Escherichia</taxon>
    </lineage>
</organism>
<protein>
    <recommendedName>
        <fullName evidence="1">Homoserine kinase</fullName>
        <shortName evidence="1">HK</shortName>
        <shortName evidence="1">HSK</shortName>
        <ecNumber evidence="1">2.7.1.39</ecNumber>
    </recommendedName>
</protein>
<gene>
    <name evidence="1" type="primary">thrB</name>
    <name type="ordered locus">E2348C_0003</name>
</gene>
<name>KHSE_ECO27</name>
<accession>B7UI48</accession>
<sequence length="310" mass="33610">MVKVYAPASSANMSVGFDVLGAAVTPVDGALLGDVVTVEAAETFSLNNLGRFADKLPSEPRENIVYQCWERFCQELGKQIPVAMTLEKNMPIGSGLGSSACSVVAALMAMNEHCGKPLNDTRLLALMGELEGRISGSIHYDNVAPCFLGGMQLMIEENDIISQQVPGFDEWLWVLAYPGIKVSTAEARAILPAQYRRQDCIAHGRHLAGFIHACYSRQPELAAKLMKDVIAEPYRERLLPGFRQARQAVAEIGAVASGISGSGPTLFALCDKPDTAQRVADWLGKNYLQNQEGFVHICRLDTAGARVLEN</sequence>
<reference key="1">
    <citation type="journal article" date="2009" name="J. Bacteriol.">
        <title>Complete genome sequence and comparative genome analysis of enteropathogenic Escherichia coli O127:H6 strain E2348/69.</title>
        <authorList>
            <person name="Iguchi A."/>
            <person name="Thomson N.R."/>
            <person name="Ogura Y."/>
            <person name="Saunders D."/>
            <person name="Ooka T."/>
            <person name="Henderson I.R."/>
            <person name="Harris D."/>
            <person name="Asadulghani M."/>
            <person name="Kurokawa K."/>
            <person name="Dean P."/>
            <person name="Kenny B."/>
            <person name="Quail M.A."/>
            <person name="Thurston S."/>
            <person name="Dougan G."/>
            <person name="Hayashi T."/>
            <person name="Parkhill J."/>
            <person name="Frankel G."/>
        </authorList>
    </citation>
    <scope>NUCLEOTIDE SEQUENCE [LARGE SCALE GENOMIC DNA]</scope>
    <source>
        <strain>E2348/69 / EPEC</strain>
    </source>
</reference>